<proteinExistence type="inferred from homology"/>
<evidence type="ECO:0000255" key="1">
    <source>
        <dbReference type="HAMAP-Rule" id="MF_00074"/>
    </source>
</evidence>
<protein>
    <recommendedName>
        <fullName evidence="1">Ribosomal RNA small subunit methyltransferase G</fullName>
        <ecNumber evidence="1">2.1.1.170</ecNumber>
    </recommendedName>
    <alternativeName>
        <fullName evidence="1">16S rRNA 7-methylguanosine methyltransferase</fullName>
        <shortName evidence="1">16S rRNA m7G methyltransferase</shortName>
    </alternativeName>
</protein>
<comment type="function">
    <text evidence="1">Specifically methylates the N7 position of guanine in position 527 of 16S rRNA.</text>
</comment>
<comment type="catalytic activity">
    <reaction evidence="1">
        <text>guanosine(527) in 16S rRNA + S-adenosyl-L-methionine = N(7)-methylguanosine(527) in 16S rRNA + S-adenosyl-L-homocysteine</text>
        <dbReference type="Rhea" id="RHEA:42732"/>
        <dbReference type="Rhea" id="RHEA-COMP:10209"/>
        <dbReference type="Rhea" id="RHEA-COMP:10210"/>
        <dbReference type="ChEBI" id="CHEBI:57856"/>
        <dbReference type="ChEBI" id="CHEBI:59789"/>
        <dbReference type="ChEBI" id="CHEBI:74269"/>
        <dbReference type="ChEBI" id="CHEBI:74480"/>
        <dbReference type="EC" id="2.1.1.170"/>
    </reaction>
</comment>
<comment type="subcellular location">
    <subcellularLocation>
        <location evidence="1">Cytoplasm</location>
    </subcellularLocation>
</comment>
<comment type="similarity">
    <text evidence="1">Belongs to the methyltransferase superfamily. RNA methyltransferase RsmG family.</text>
</comment>
<feature type="chain" id="PRO_0000184218" description="Ribosomal RNA small subunit methyltransferase G">
    <location>
        <begin position="1"/>
        <end position="215"/>
    </location>
</feature>
<feature type="binding site" evidence="1">
    <location>
        <position position="77"/>
    </location>
    <ligand>
        <name>S-adenosyl-L-methionine</name>
        <dbReference type="ChEBI" id="CHEBI:59789"/>
    </ligand>
</feature>
<feature type="binding site" evidence="1">
    <location>
        <position position="82"/>
    </location>
    <ligand>
        <name>S-adenosyl-L-methionine</name>
        <dbReference type="ChEBI" id="CHEBI:59789"/>
    </ligand>
</feature>
<feature type="binding site" evidence="1">
    <location>
        <begin position="130"/>
        <end position="131"/>
    </location>
    <ligand>
        <name>S-adenosyl-L-methionine</name>
        <dbReference type="ChEBI" id="CHEBI:59789"/>
    </ligand>
</feature>
<feature type="binding site" evidence="1">
    <location>
        <position position="146"/>
    </location>
    <ligand>
        <name>S-adenosyl-L-methionine</name>
        <dbReference type="ChEBI" id="CHEBI:59789"/>
    </ligand>
</feature>
<dbReference type="EC" id="2.1.1.170" evidence="1"/>
<dbReference type="EMBL" id="BX897699">
    <property type="protein sequence ID" value="CAF28428.1"/>
    <property type="molecule type" value="Genomic_DNA"/>
</dbReference>
<dbReference type="RefSeq" id="WP_011181427.1">
    <property type="nucleotide sequence ID" value="NZ_LRIJ02000001.1"/>
</dbReference>
<dbReference type="SMR" id="Q6G1L0"/>
<dbReference type="PaxDb" id="283166-BH16670"/>
<dbReference type="EnsemblBacteria" id="CAF28428">
    <property type="protein sequence ID" value="CAF28428"/>
    <property type="gene ID" value="BH16670"/>
</dbReference>
<dbReference type="GeneID" id="92986286"/>
<dbReference type="KEGG" id="bhe:BH16670"/>
<dbReference type="eggNOG" id="COG0357">
    <property type="taxonomic scope" value="Bacteria"/>
</dbReference>
<dbReference type="OrthoDB" id="9808773at2"/>
<dbReference type="Proteomes" id="UP000000421">
    <property type="component" value="Chromosome"/>
</dbReference>
<dbReference type="GO" id="GO:0005829">
    <property type="term" value="C:cytosol"/>
    <property type="evidence" value="ECO:0007669"/>
    <property type="project" value="TreeGrafter"/>
</dbReference>
<dbReference type="GO" id="GO:0070043">
    <property type="term" value="F:rRNA (guanine-N7-)-methyltransferase activity"/>
    <property type="evidence" value="ECO:0007669"/>
    <property type="project" value="UniProtKB-UniRule"/>
</dbReference>
<dbReference type="Gene3D" id="3.40.50.150">
    <property type="entry name" value="Vaccinia Virus protein VP39"/>
    <property type="match status" value="1"/>
</dbReference>
<dbReference type="HAMAP" id="MF_00074">
    <property type="entry name" value="16SrRNA_methyltr_G"/>
    <property type="match status" value="1"/>
</dbReference>
<dbReference type="InterPro" id="IPR003682">
    <property type="entry name" value="rRNA_ssu_MeTfrase_G"/>
</dbReference>
<dbReference type="InterPro" id="IPR029063">
    <property type="entry name" value="SAM-dependent_MTases_sf"/>
</dbReference>
<dbReference type="NCBIfam" id="TIGR00138">
    <property type="entry name" value="rsmG_gidB"/>
    <property type="match status" value="1"/>
</dbReference>
<dbReference type="PANTHER" id="PTHR31760">
    <property type="entry name" value="S-ADENOSYL-L-METHIONINE-DEPENDENT METHYLTRANSFERASES SUPERFAMILY PROTEIN"/>
    <property type="match status" value="1"/>
</dbReference>
<dbReference type="PANTHER" id="PTHR31760:SF0">
    <property type="entry name" value="S-ADENOSYL-L-METHIONINE-DEPENDENT METHYLTRANSFERASES SUPERFAMILY PROTEIN"/>
    <property type="match status" value="1"/>
</dbReference>
<dbReference type="Pfam" id="PF02527">
    <property type="entry name" value="GidB"/>
    <property type="match status" value="1"/>
</dbReference>
<dbReference type="PIRSF" id="PIRSF003078">
    <property type="entry name" value="GidB"/>
    <property type="match status" value="1"/>
</dbReference>
<dbReference type="SUPFAM" id="SSF53335">
    <property type="entry name" value="S-adenosyl-L-methionine-dependent methyltransferases"/>
    <property type="match status" value="1"/>
</dbReference>
<name>RSMG_BARHE</name>
<reference key="1">
    <citation type="journal article" date="2004" name="Proc. Natl. Acad. Sci. U.S.A.">
        <title>The louse-borne human pathogen Bartonella quintana is a genomic derivative of the zoonotic agent Bartonella henselae.</title>
        <authorList>
            <person name="Alsmark U.C.M."/>
            <person name="Frank A.C."/>
            <person name="Karlberg E.O."/>
            <person name="Legault B.-A."/>
            <person name="Ardell D.H."/>
            <person name="Canbaeck B."/>
            <person name="Eriksson A.-S."/>
            <person name="Naeslund A.K."/>
            <person name="Handley S.A."/>
            <person name="Huvet M."/>
            <person name="La Scola B."/>
            <person name="Holmberg M."/>
            <person name="Andersson S.G.E."/>
        </authorList>
    </citation>
    <scope>NUCLEOTIDE SEQUENCE [LARGE SCALE GENOMIC DNA]</scope>
    <source>
        <strain>ATCC 49882 / DSM 28221 / CCUG 30454 / Houston 1</strain>
    </source>
</reference>
<accession>Q6G1L0</accession>
<keyword id="KW-0963">Cytoplasm</keyword>
<keyword id="KW-0489">Methyltransferase</keyword>
<keyword id="KW-0698">rRNA processing</keyword>
<keyword id="KW-0949">S-adenosyl-L-methionine</keyword>
<keyword id="KW-0808">Transferase</keyword>
<gene>
    <name evidence="1" type="primary">rsmG</name>
    <name type="ordered locus">BH16670</name>
</gene>
<sequence>MDFSIEQKYQELLKIISSVSRETMQDLMHFESLIIQWNKHINLISSSTIPLLWTRHILDSAQIYPLHSDLLHWCDLGSGGGFPAIVIAIFMKEKKTGHIDLVESNGKKVAFLRTVIAQLDLPATVYHCRIEDVTQKIKNPEVITARGLACLDDLLRLIFPLLTQKTIALLQKGRDYSKEIKNASANWQFDLLKHKSKIDENSVILEISQVRSFRG</sequence>
<organism>
    <name type="scientific">Bartonella henselae (strain ATCC 49882 / DSM 28221 / CCUG 30454 / Houston 1)</name>
    <name type="common">Rochalimaea henselae</name>
    <dbReference type="NCBI Taxonomy" id="283166"/>
    <lineage>
        <taxon>Bacteria</taxon>
        <taxon>Pseudomonadati</taxon>
        <taxon>Pseudomonadota</taxon>
        <taxon>Alphaproteobacteria</taxon>
        <taxon>Hyphomicrobiales</taxon>
        <taxon>Bartonellaceae</taxon>
        <taxon>Bartonella</taxon>
    </lineage>
</organism>